<gene>
    <name type="primary">dlx2a</name>
    <name type="synonym">dlx2</name>
</gene>
<accession>P50574</accession>
<proteinExistence type="evidence at transcript level"/>
<name>DLX2A_DANRE</name>
<evidence type="ECO:0000255" key="1">
    <source>
        <dbReference type="PROSITE-ProRule" id="PRU00108"/>
    </source>
</evidence>
<evidence type="ECO:0000256" key="2">
    <source>
        <dbReference type="SAM" id="MobiDB-lite"/>
    </source>
</evidence>
<evidence type="ECO:0000305" key="3"/>
<keyword id="KW-0217">Developmental protein</keyword>
<keyword id="KW-0238">DNA-binding</keyword>
<keyword id="KW-0371">Homeobox</keyword>
<keyword id="KW-0539">Nucleus</keyword>
<keyword id="KW-1185">Reference proteome</keyword>
<comment type="function">
    <text>Involved in the development of the inner ear.</text>
</comment>
<comment type="subcellular location">
    <subcellularLocation>
        <location evidence="1">Nucleus</location>
    </subcellularLocation>
</comment>
<comment type="tissue specificity">
    <text>Expressed in the developing forebrain and fins.</text>
</comment>
<comment type="developmental stage">
    <text>Not expressed during gastrulation, and shortly after gastrulation found in the cells of the ventral fore-brain rudiment, and hind-brain neural crest cells. Not expressed in the auditory vesicles, found in low levels in localized regions of the median fin fold, and is also expressed by the cells of the visceral arches and their primordia.</text>
</comment>
<comment type="similarity">
    <text evidence="3">Belongs to the distal-less homeobox family.</text>
</comment>
<organism>
    <name type="scientific">Danio rerio</name>
    <name type="common">Zebrafish</name>
    <name type="synonym">Brachydanio rerio</name>
    <dbReference type="NCBI Taxonomy" id="7955"/>
    <lineage>
        <taxon>Eukaryota</taxon>
        <taxon>Metazoa</taxon>
        <taxon>Chordata</taxon>
        <taxon>Craniata</taxon>
        <taxon>Vertebrata</taxon>
        <taxon>Euteleostomi</taxon>
        <taxon>Actinopterygii</taxon>
        <taxon>Neopterygii</taxon>
        <taxon>Teleostei</taxon>
        <taxon>Ostariophysi</taxon>
        <taxon>Cypriniformes</taxon>
        <taxon>Danionidae</taxon>
        <taxon>Danioninae</taxon>
        <taxon>Danio</taxon>
    </lineage>
</organism>
<sequence>MTGVFDSLSTDMHSNQITSSSYHSLHKSQESPTLPVSTATDSSINNNNQQCAGSPYGQSSSYQYQNNSMNSVQYNTKSYELGFGNAFGPYGTYGSCSSPTPADAEKEEREPEIRMVNGKPKKVRKPRTIYSTFQLAALQRRFQKTQYLALPERAELAASLGLTQTQVKIWFQNRRSKFKKLWKSGEIPPEQHVASGESPPHPSPPLAAAWDFAHSQRMNTVNSGLSQSSPPNSTTPSFLTNYPWYSSTNSAAHLQPPLHHNTTVSAGTIF</sequence>
<protein>
    <recommendedName>
        <fullName>Homeobox protein Dlx2a</fullName>
        <shortName>DLX-2</shortName>
    </recommendedName>
    <alternativeName>
        <fullName>Distal-less homeobox gene 2a</fullName>
    </alternativeName>
</protein>
<reference key="1">
    <citation type="journal article" date="1994" name="J. Neurosci.">
        <title>Combinatorial expression of three zebrafish genes related to distal-less: part of a homeobox gene code for the head.</title>
        <authorList>
            <person name="Akimenko M.-A."/>
            <person name="Ekker M."/>
            <person name="Wegner J."/>
            <person name="Lin W."/>
            <person name="Westerfield M."/>
        </authorList>
    </citation>
    <scope>NUCLEOTIDE SEQUENCE [MRNA]</scope>
</reference>
<dbReference type="EMBL" id="U03875">
    <property type="protein sequence ID" value="AAA19826.1"/>
    <property type="molecule type" value="mRNA"/>
</dbReference>
<dbReference type="PIR" id="I50111">
    <property type="entry name" value="I50111"/>
</dbReference>
<dbReference type="SMR" id="P50574"/>
<dbReference type="FunCoup" id="P50574">
    <property type="interactions" value="11"/>
</dbReference>
<dbReference type="STRING" id="7955.ENSDARP00000103004"/>
<dbReference type="PaxDb" id="7955-ENSDARP00000103004"/>
<dbReference type="AGR" id="ZFIN:ZDB-GENE-980526-212"/>
<dbReference type="ZFIN" id="ZDB-GENE-980526-212">
    <property type="gene designation" value="dlx2a"/>
</dbReference>
<dbReference type="eggNOG" id="KOG0850">
    <property type="taxonomic scope" value="Eukaryota"/>
</dbReference>
<dbReference type="InParanoid" id="P50574"/>
<dbReference type="PRO" id="PR:P50574"/>
<dbReference type="Proteomes" id="UP000000437">
    <property type="component" value="Unplaced"/>
</dbReference>
<dbReference type="GO" id="GO:0005634">
    <property type="term" value="C:nucleus"/>
    <property type="evidence" value="ECO:0007669"/>
    <property type="project" value="UniProtKB-SubCell"/>
</dbReference>
<dbReference type="GO" id="GO:0000981">
    <property type="term" value="F:DNA-binding transcription factor activity, RNA polymerase II-specific"/>
    <property type="evidence" value="ECO:0000318"/>
    <property type="project" value="GO_Central"/>
</dbReference>
<dbReference type="GO" id="GO:0000978">
    <property type="term" value="F:RNA polymerase II cis-regulatory region sequence-specific DNA binding"/>
    <property type="evidence" value="ECO:0000318"/>
    <property type="project" value="GO_Central"/>
</dbReference>
<dbReference type="GO" id="GO:0051216">
    <property type="term" value="P:cartilage development"/>
    <property type="evidence" value="ECO:0000315"/>
    <property type="project" value="ZFIN"/>
</dbReference>
<dbReference type="GO" id="GO:0030154">
    <property type="term" value="P:cell differentiation"/>
    <property type="evidence" value="ECO:0000318"/>
    <property type="project" value="GO_Central"/>
</dbReference>
<dbReference type="GO" id="GO:0048706">
    <property type="term" value="P:embryonic skeletal system development"/>
    <property type="evidence" value="ECO:0000318"/>
    <property type="project" value="GO_Central"/>
</dbReference>
<dbReference type="GO" id="GO:0048703">
    <property type="term" value="P:embryonic viscerocranium morphogenesis"/>
    <property type="evidence" value="ECO:0000315"/>
    <property type="project" value="ZFIN"/>
</dbReference>
<dbReference type="GO" id="GO:0046533">
    <property type="term" value="P:negative regulation of photoreceptor cell differentiation"/>
    <property type="evidence" value="ECO:0000250"/>
    <property type="project" value="UniProtKB"/>
</dbReference>
<dbReference type="GO" id="GO:0014032">
    <property type="term" value="P:neural crest cell development"/>
    <property type="evidence" value="ECO:0000315"/>
    <property type="project" value="ZFIN"/>
</dbReference>
<dbReference type="GO" id="GO:0007422">
    <property type="term" value="P:peripheral nervous system development"/>
    <property type="evidence" value="ECO:0000315"/>
    <property type="project" value="ZFIN"/>
</dbReference>
<dbReference type="GO" id="GO:0060037">
    <property type="term" value="P:pharyngeal system development"/>
    <property type="evidence" value="ECO:0000315"/>
    <property type="project" value="ZFIN"/>
</dbReference>
<dbReference type="GO" id="GO:1902871">
    <property type="term" value="P:positive regulation of amacrine cell differentiation"/>
    <property type="evidence" value="ECO:0000250"/>
    <property type="project" value="UniProtKB"/>
</dbReference>
<dbReference type="GO" id="GO:0045597">
    <property type="term" value="P:positive regulation of cell differentiation"/>
    <property type="evidence" value="ECO:0000250"/>
    <property type="project" value="UniProtKB"/>
</dbReference>
<dbReference type="GO" id="GO:0006357">
    <property type="term" value="P:regulation of transcription by RNA polymerase II"/>
    <property type="evidence" value="ECO:0000318"/>
    <property type="project" value="GO_Central"/>
</dbReference>
<dbReference type="GO" id="GO:0042254">
    <property type="term" value="P:ribosome biogenesis"/>
    <property type="evidence" value="ECO:0000315"/>
    <property type="project" value="ZFIN"/>
</dbReference>
<dbReference type="CDD" id="cd00086">
    <property type="entry name" value="homeodomain"/>
    <property type="match status" value="1"/>
</dbReference>
<dbReference type="FunFam" id="1.10.10.60:FF:000048">
    <property type="entry name" value="Distal-less homeobox 2"/>
    <property type="match status" value="1"/>
</dbReference>
<dbReference type="Gene3D" id="1.10.10.60">
    <property type="entry name" value="Homeodomain-like"/>
    <property type="match status" value="1"/>
</dbReference>
<dbReference type="InterPro" id="IPR050460">
    <property type="entry name" value="Distal-less_Homeobox_TF"/>
</dbReference>
<dbReference type="InterPro" id="IPR022135">
    <property type="entry name" value="Distal-less_N"/>
</dbReference>
<dbReference type="InterPro" id="IPR001356">
    <property type="entry name" value="HD"/>
</dbReference>
<dbReference type="InterPro" id="IPR020479">
    <property type="entry name" value="HD_metazoa"/>
</dbReference>
<dbReference type="InterPro" id="IPR017970">
    <property type="entry name" value="Homeobox_CS"/>
</dbReference>
<dbReference type="InterPro" id="IPR009057">
    <property type="entry name" value="Homeodomain-like_sf"/>
</dbReference>
<dbReference type="InterPro" id="IPR000047">
    <property type="entry name" value="HTH_motif"/>
</dbReference>
<dbReference type="PANTHER" id="PTHR24327">
    <property type="entry name" value="HOMEOBOX PROTEIN"/>
    <property type="match status" value="1"/>
</dbReference>
<dbReference type="PANTHER" id="PTHR24327:SF23">
    <property type="entry name" value="HOMEOBOX PROTEIN DLX-2"/>
    <property type="match status" value="1"/>
</dbReference>
<dbReference type="Pfam" id="PF12413">
    <property type="entry name" value="DLL_N"/>
    <property type="match status" value="1"/>
</dbReference>
<dbReference type="Pfam" id="PF00046">
    <property type="entry name" value="Homeodomain"/>
    <property type="match status" value="1"/>
</dbReference>
<dbReference type="PRINTS" id="PR00024">
    <property type="entry name" value="HOMEOBOX"/>
</dbReference>
<dbReference type="PRINTS" id="PR00031">
    <property type="entry name" value="HTHREPRESSR"/>
</dbReference>
<dbReference type="SMART" id="SM00389">
    <property type="entry name" value="HOX"/>
    <property type="match status" value="1"/>
</dbReference>
<dbReference type="SUPFAM" id="SSF46689">
    <property type="entry name" value="Homeodomain-like"/>
    <property type="match status" value="1"/>
</dbReference>
<dbReference type="PROSITE" id="PS00027">
    <property type="entry name" value="HOMEOBOX_1"/>
    <property type="match status" value="1"/>
</dbReference>
<dbReference type="PROSITE" id="PS50071">
    <property type="entry name" value="HOMEOBOX_2"/>
    <property type="match status" value="1"/>
</dbReference>
<feature type="chain" id="PRO_0000049047" description="Homeobox protein Dlx2a">
    <location>
        <begin position="1"/>
        <end position="270"/>
    </location>
</feature>
<feature type="DNA-binding region" description="Homeobox" evidence="1">
    <location>
        <begin position="123"/>
        <end position="182"/>
    </location>
</feature>
<feature type="region of interest" description="Disordered" evidence="2">
    <location>
        <begin position="19"/>
        <end position="64"/>
    </location>
</feature>
<feature type="compositionally biased region" description="Polar residues" evidence="2">
    <location>
        <begin position="30"/>
        <end position="52"/>
    </location>
</feature>
<feature type="compositionally biased region" description="Low complexity" evidence="2">
    <location>
        <begin position="54"/>
        <end position="64"/>
    </location>
</feature>